<protein>
    <recommendedName>
        <fullName evidence="1">Acetaldehyde dehydrogenase</fullName>
        <ecNumber evidence="1">1.2.1.10</ecNumber>
    </recommendedName>
    <alternativeName>
        <fullName evidence="1">Acetaldehyde dehydrogenase [acetylating]</fullName>
    </alternativeName>
</protein>
<keyword id="KW-0058">Aromatic hydrocarbons catabolism</keyword>
<keyword id="KW-0520">NAD</keyword>
<keyword id="KW-0560">Oxidoreductase</keyword>
<keyword id="KW-1185">Reference proteome</keyword>
<dbReference type="EC" id="1.2.1.10" evidence="1"/>
<dbReference type="EMBL" id="CP000909">
    <property type="protein sequence ID" value="ABY34578.1"/>
    <property type="molecule type" value="Genomic_DNA"/>
</dbReference>
<dbReference type="RefSeq" id="WP_012257234.1">
    <property type="nucleotide sequence ID" value="NC_010175.1"/>
</dbReference>
<dbReference type="RefSeq" id="YP_001634967.1">
    <property type="nucleotide sequence ID" value="NC_010175.1"/>
</dbReference>
<dbReference type="SMR" id="A9W9U2"/>
<dbReference type="STRING" id="324602.Caur_1350"/>
<dbReference type="EnsemblBacteria" id="ABY34578">
    <property type="protein sequence ID" value="ABY34578"/>
    <property type="gene ID" value="Caur_1350"/>
</dbReference>
<dbReference type="KEGG" id="cau:Caur_1350"/>
<dbReference type="PATRIC" id="fig|324602.8.peg.1538"/>
<dbReference type="eggNOG" id="COG4569">
    <property type="taxonomic scope" value="Bacteria"/>
</dbReference>
<dbReference type="HOGENOM" id="CLU_062208_0_0_0"/>
<dbReference type="InParanoid" id="A9W9U2"/>
<dbReference type="Proteomes" id="UP000002008">
    <property type="component" value="Chromosome"/>
</dbReference>
<dbReference type="GO" id="GO:0008774">
    <property type="term" value="F:acetaldehyde dehydrogenase (acetylating) activity"/>
    <property type="evidence" value="ECO:0007669"/>
    <property type="project" value="UniProtKB-UniRule"/>
</dbReference>
<dbReference type="GO" id="GO:0051287">
    <property type="term" value="F:NAD binding"/>
    <property type="evidence" value="ECO:0007669"/>
    <property type="project" value="UniProtKB-UniRule"/>
</dbReference>
<dbReference type="GO" id="GO:0009056">
    <property type="term" value="P:catabolic process"/>
    <property type="evidence" value="ECO:0007669"/>
    <property type="project" value="UniProtKB-KW"/>
</dbReference>
<dbReference type="CDD" id="cd23933">
    <property type="entry name" value="ALDH_C"/>
    <property type="match status" value="1"/>
</dbReference>
<dbReference type="Gene3D" id="3.30.360.10">
    <property type="entry name" value="Dihydrodipicolinate Reductase, domain 2"/>
    <property type="match status" value="1"/>
</dbReference>
<dbReference type="Gene3D" id="3.40.50.720">
    <property type="entry name" value="NAD(P)-binding Rossmann-like Domain"/>
    <property type="match status" value="1"/>
</dbReference>
<dbReference type="HAMAP" id="MF_01657">
    <property type="entry name" value="Ac_ald_DH_ac"/>
    <property type="match status" value="1"/>
</dbReference>
<dbReference type="InterPro" id="IPR003361">
    <property type="entry name" value="Acetaldehyde_dehydrogenase"/>
</dbReference>
<dbReference type="InterPro" id="IPR015426">
    <property type="entry name" value="Acetylaldehyde_DH_C"/>
</dbReference>
<dbReference type="InterPro" id="IPR036291">
    <property type="entry name" value="NAD(P)-bd_dom_sf"/>
</dbReference>
<dbReference type="InterPro" id="IPR000534">
    <property type="entry name" value="Semialdehyde_DH_NAD-bd"/>
</dbReference>
<dbReference type="NCBIfam" id="TIGR03215">
    <property type="entry name" value="ac_ald_DH_ac"/>
    <property type="match status" value="1"/>
</dbReference>
<dbReference type="NCBIfam" id="NF006157">
    <property type="entry name" value="PRK08300.1"/>
    <property type="match status" value="1"/>
</dbReference>
<dbReference type="Pfam" id="PF09290">
    <property type="entry name" value="AcetDehyd-dimer"/>
    <property type="match status" value="1"/>
</dbReference>
<dbReference type="Pfam" id="PF01118">
    <property type="entry name" value="Semialdhyde_dh"/>
    <property type="match status" value="1"/>
</dbReference>
<dbReference type="PIRSF" id="PIRSF015689">
    <property type="entry name" value="Actaldh_dh_actl"/>
    <property type="match status" value="1"/>
</dbReference>
<dbReference type="SMART" id="SM00859">
    <property type="entry name" value="Semialdhyde_dh"/>
    <property type="match status" value="1"/>
</dbReference>
<dbReference type="SUPFAM" id="SSF55347">
    <property type="entry name" value="Glyceraldehyde-3-phosphate dehydrogenase-like, C-terminal domain"/>
    <property type="match status" value="1"/>
</dbReference>
<dbReference type="SUPFAM" id="SSF51735">
    <property type="entry name" value="NAD(P)-binding Rossmann-fold domains"/>
    <property type="match status" value="1"/>
</dbReference>
<name>ACDH_CHLAA</name>
<proteinExistence type="inferred from homology"/>
<evidence type="ECO:0000255" key="1">
    <source>
        <dbReference type="HAMAP-Rule" id="MF_01657"/>
    </source>
</evidence>
<accession>A9W9U2</accession>
<feature type="chain" id="PRO_0000387649" description="Acetaldehyde dehydrogenase">
    <location>
        <begin position="1"/>
        <end position="305"/>
    </location>
</feature>
<feature type="active site" description="Acyl-thioester intermediate" evidence="1">
    <location>
        <position position="128"/>
    </location>
</feature>
<feature type="binding site" evidence="1">
    <location>
        <begin position="13"/>
        <end position="16"/>
    </location>
    <ligand>
        <name>NAD(+)</name>
        <dbReference type="ChEBI" id="CHEBI:57540"/>
    </ligand>
</feature>
<feature type="binding site" evidence="1">
    <location>
        <begin position="159"/>
        <end position="167"/>
    </location>
    <ligand>
        <name>NAD(+)</name>
        <dbReference type="ChEBI" id="CHEBI:57540"/>
    </ligand>
</feature>
<feature type="binding site" evidence="1">
    <location>
        <position position="278"/>
    </location>
    <ligand>
        <name>NAD(+)</name>
        <dbReference type="ChEBI" id="CHEBI:57540"/>
    </ligand>
</feature>
<gene>
    <name type="ordered locus">Caur_1350</name>
</gene>
<sequence>MQIDKVKVAILGSGNIGTDLMYKLLKQPGRMELALVAGIDPASEGLARARQIGIPTATDGIESILADPDIRIVFDATSAKAHVRHARLLRDHGRIAIDLTPAARGPYVVPPVNLGEHLEAHNVNLITCGGQATIPLVYAVSRVTAVRYAEMVSTVASRSAGPGTRQNIDEFTFTTARGLEAIGGAREAKAIIILNPAHPPILMRNTIYVVPEGDFDEETVRQSVAQMVADVQQYVPGYRLKSLPVIEQRSTPWGERPVIIMLLEVEGAGDFLPTYAGNLDIMTAAARRVGELFAAHLLSKLEVTV</sequence>
<organism>
    <name type="scientific">Chloroflexus aurantiacus (strain ATCC 29366 / DSM 635 / J-10-fl)</name>
    <dbReference type="NCBI Taxonomy" id="324602"/>
    <lineage>
        <taxon>Bacteria</taxon>
        <taxon>Bacillati</taxon>
        <taxon>Chloroflexota</taxon>
        <taxon>Chloroflexia</taxon>
        <taxon>Chloroflexales</taxon>
        <taxon>Chloroflexineae</taxon>
        <taxon>Chloroflexaceae</taxon>
        <taxon>Chloroflexus</taxon>
    </lineage>
</organism>
<reference key="1">
    <citation type="journal article" date="2011" name="BMC Genomics">
        <title>Complete genome sequence of the filamentous anoxygenic phototrophic bacterium Chloroflexus aurantiacus.</title>
        <authorList>
            <person name="Tang K.H."/>
            <person name="Barry K."/>
            <person name="Chertkov O."/>
            <person name="Dalin E."/>
            <person name="Han C.S."/>
            <person name="Hauser L.J."/>
            <person name="Honchak B.M."/>
            <person name="Karbach L.E."/>
            <person name="Land M.L."/>
            <person name="Lapidus A."/>
            <person name="Larimer F.W."/>
            <person name="Mikhailova N."/>
            <person name="Pitluck S."/>
            <person name="Pierson B.K."/>
            <person name="Blankenship R.E."/>
        </authorList>
    </citation>
    <scope>NUCLEOTIDE SEQUENCE [LARGE SCALE GENOMIC DNA]</scope>
    <source>
        <strain>ATCC 29366 / DSM 635 / J-10-fl</strain>
    </source>
</reference>
<comment type="catalytic activity">
    <reaction evidence="1">
        <text>acetaldehyde + NAD(+) + CoA = acetyl-CoA + NADH + H(+)</text>
        <dbReference type="Rhea" id="RHEA:23288"/>
        <dbReference type="ChEBI" id="CHEBI:15343"/>
        <dbReference type="ChEBI" id="CHEBI:15378"/>
        <dbReference type="ChEBI" id="CHEBI:57287"/>
        <dbReference type="ChEBI" id="CHEBI:57288"/>
        <dbReference type="ChEBI" id="CHEBI:57540"/>
        <dbReference type="ChEBI" id="CHEBI:57945"/>
        <dbReference type="EC" id="1.2.1.10"/>
    </reaction>
</comment>
<comment type="similarity">
    <text evidence="1">Belongs to the acetaldehyde dehydrogenase family.</text>
</comment>